<proteinExistence type="evidence at transcript level"/>
<gene>
    <name type="primary">GF14G</name>
    <name type="ordered locus">Os01g0209200</name>
    <name type="ordered locus">LOC_Os01g11110</name>
    <name type="ORF">OSJNBa0016I09.32</name>
</gene>
<feature type="chain" id="PRO_0000246068" description="14-3-3-like protein GF14-G">
    <location>
        <begin position="1"/>
        <end position="257"/>
    </location>
</feature>
<sequence length="257" mass="28805">MAPSDDLVYMAKLAEQAERYDEMVEAMNSVAKLDEGLTKEERNLLSVGYKNLIGAKRAAMRIIGSIELKEETKGKESHVRQTAEYRRKVEAEMDKICCDVINIIDKYLIPHSSGAESSVFYYKMKGDYYRYLAEFKTGTEKIEVSELSLNAYETASKTAQTDLTPTDPIRLGLALNISVFYCEIMNSPDKACQLAKNAFDEAVAELPSLSEENYKDSTLIMQLLRDNLALWNSDMADDADDIRERTDTTGAKGDPAA</sequence>
<dbReference type="EMBL" id="AP003052">
    <property type="protein sequence ID" value="BAD73105.1"/>
    <property type="molecule type" value="Genomic_DNA"/>
</dbReference>
<dbReference type="EMBL" id="AP008207">
    <property type="protein sequence ID" value="BAF04275.1"/>
    <property type="molecule type" value="Genomic_DNA"/>
</dbReference>
<dbReference type="EMBL" id="AP014957">
    <property type="protein sequence ID" value="BAS70969.1"/>
    <property type="molecule type" value="Genomic_DNA"/>
</dbReference>
<dbReference type="EMBL" id="AK103145">
    <property type="protein sequence ID" value="BAG95918.1"/>
    <property type="molecule type" value="mRNA"/>
</dbReference>
<dbReference type="RefSeq" id="XP_015629247.1">
    <property type="nucleotide sequence ID" value="XM_015773761.1"/>
</dbReference>
<dbReference type="SMR" id="Q5QNB8"/>
<dbReference type="DIP" id="DIP-46491N"/>
<dbReference type="FunCoup" id="Q5QNB8">
    <property type="interactions" value="3"/>
</dbReference>
<dbReference type="IntAct" id="Q5QNB8">
    <property type="interactions" value="1"/>
</dbReference>
<dbReference type="STRING" id="39947.Q5QNB8"/>
<dbReference type="PaxDb" id="39947-Q5QNB8"/>
<dbReference type="EnsemblPlants" id="Os01t0209200-01">
    <property type="protein sequence ID" value="Os01t0209200-01"/>
    <property type="gene ID" value="Os01g0209200"/>
</dbReference>
<dbReference type="Gramene" id="Os01t0209200-01">
    <property type="protein sequence ID" value="Os01t0209200-01"/>
    <property type="gene ID" value="Os01g0209200"/>
</dbReference>
<dbReference type="KEGG" id="dosa:Os01g0209200"/>
<dbReference type="eggNOG" id="KOG0841">
    <property type="taxonomic scope" value="Eukaryota"/>
</dbReference>
<dbReference type="HOGENOM" id="CLU_058290_0_0_1"/>
<dbReference type="InParanoid" id="Q5QNB8"/>
<dbReference type="OMA" id="VFYCEIM"/>
<dbReference type="OrthoDB" id="10260625at2759"/>
<dbReference type="PlantReactome" id="R-OSA-5632095">
    <property type="pathway name" value="Brassinosteroid signaling"/>
</dbReference>
<dbReference type="Proteomes" id="UP000000763">
    <property type="component" value="Chromosome 1"/>
</dbReference>
<dbReference type="Proteomes" id="UP000059680">
    <property type="component" value="Chromosome 1"/>
</dbReference>
<dbReference type="GO" id="GO:0005737">
    <property type="term" value="C:cytoplasm"/>
    <property type="evidence" value="ECO:0000318"/>
    <property type="project" value="GO_Central"/>
</dbReference>
<dbReference type="GO" id="GO:0008104">
    <property type="term" value="P:protein localization"/>
    <property type="evidence" value="ECO:0000318"/>
    <property type="project" value="GO_Central"/>
</dbReference>
<dbReference type="GO" id="GO:0007165">
    <property type="term" value="P:signal transduction"/>
    <property type="evidence" value="ECO:0000318"/>
    <property type="project" value="GO_Central"/>
</dbReference>
<dbReference type="FunFam" id="1.20.190.20:FF:000001">
    <property type="entry name" value="14-3-3 gamma 1"/>
    <property type="match status" value="1"/>
</dbReference>
<dbReference type="Gene3D" id="1.20.190.20">
    <property type="entry name" value="14-3-3 domain"/>
    <property type="match status" value="1"/>
</dbReference>
<dbReference type="InterPro" id="IPR000308">
    <property type="entry name" value="14-3-3"/>
</dbReference>
<dbReference type="InterPro" id="IPR036815">
    <property type="entry name" value="14-3-3_dom_sf"/>
</dbReference>
<dbReference type="InterPro" id="IPR023410">
    <property type="entry name" value="14-3-3_domain"/>
</dbReference>
<dbReference type="PANTHER" id="PTHR18860">
    <property type="entry name" value="14-3-3 PROTEIN"/>
    <property type="match status" value="1"/>
</dbReference>
<dbReference type="Pfam" id="PF00244">
    <property type="entry name" value="14-3-3"/>
    <property type="match status" value="1"/>
</dbReference>
<dbReference type="PIRSF" id="PIRSF000868">
    <property type="entry name" value="14-3-3"/>
    <property type="match status" value="1"/>
</dbReference>
<dbReference type="PRINTS" id="PR00305">
    <property type="entry name" value="1433ZETA"/>
</dbReference>
<dbReference type="SMART" id="SM00101">
    <property type="entry name" value="14_3_3"/>
    <property type="match status" value="1"/>
</dbReference>
<dbReference type="SUPFAM" id="SSF48445">
    <property type="entry name" value="14-3-3 protein"/>
    <property type="match status" value="1"/>
</dbReference>
<name>14337_ORYSJ</name>
<accession>Q5QNB8</accession>
<accession>Q0JPQ3</accession>
<evidence type="ECO:0000250" key="1"/>
<evidence type="ECO:0000305" key="2"/>
<keyword id="KW-1185">Reference proteome</keyword>
<organism>
    <name type="scientific">Oryza sativa subsp. japonica</name>
    <name type="common">Rice</name>
    <dbReference type="NCBI Taxonomy" id="39947"/>
    <lineage>
        <taxon>Eukaryota</taxon>
        <taxon>Viridiplantae</taxon>
        <taxon>Streptophyta</taxon>
        <taxon>Embryophyta</taxon>
        <taxon>Tracheophyta</taxon>
        <taxon>Spermatophyta</taxon>
        <taxon>Magnoliopsida</taxon>
        <taxon>Liliopsida</taxon>
        <taxon>Poales</taxon>
        <taxon>Poaceae</taxon>
        <taxon>BOP clade</taxon>
        <taxon>Oryzoideae</taxon>
        <taxon>Oryzeae</taxon>
        <taxon>Oryzinae</taxon>
        <taxon>Oryza</taxon>
        <taxon>Oryza sativa</taxon>
    </lineage>
</organism>
<comment type="function">
    <text evidence="1">Is associated with a DNA binding complex that binds to the G box, a well-characterized cis-acting DNA regulatory element found in plant genes.</text>
</comment>
<comment type="similarity">
    <text evidence="2">Belongs to the 14-3-3 family.</text>
</comment>
<reference key="1">
    <citation type="journal article" date="2002" name="Nature">
        <title>The genome sequence and structure of rice chromosome 1.</title>
        <authorList>
            <person name="Sasaki T."/>
            <person name="Matsumoto T."/>
            <person name="Yamamoto K."/>
            <person name="Sakata K."/>
            <person name="Baba T."/>
            <person name="Katayose Y."/>
            <person name="Wu J."/>
            <person name="Niimura Y."/>
            <person name="Cheng Z."/>
            <person name="Nagamura Y."/>
            <person name="Antonio B.A."/>
            <person name="Kanamori H."/>
            <person name="Hosokawa S."/>
            <person name="Masukawa M."/>
            <person name="Arikawa K."/>
            <person name="Chiden Y."/>
            <person name="Hayashi M."/>
            <person name="Okamoto M."/>
            <person name="Ando T."/>
            <person name="Aoki H."/>
            <person name="Arita K."/>
            <person name="Hamada M."/>
            <person name="Harada C."/>
            <person name="Hijishita S."/>
            <person name="Honda M."/>
            <person name="Ichikawa Y."/>
            <person name="Idonuma A."/>
            <person name="Iijima M."/>
            <person name="Ikeda M."/>
            <person name="Ikeno M."/>
            <person name="Ito S."/>
            <person name="Ito T."/>
            <person name="Ito Y."/>
            <person name="Ito Y."/>
            <person name="Iwabuchi A."/>
            <person name="Kamiya K."/>
            <person name="Karasawa W."/>
            <person name="Katagiri S."/>
            <person name="Kikuta A."/>
            <person name="Kobayashi N."/>
            <person name="Kono I."/>
            <person name="Machita K."/>
            <person name="Maehara T."/>
            <person name="Mizuno H."/>
            <person name="Mizubayashi T."/>
            <person name="Mukai Y."/>
            <person name="Nagasaki H."/>
            <person name="Nakashima M."/>
            <person name="Nakama Y."/>
            <person name="Nakamichi Y."/>
            <person name="Nakamura M."/>
            <person name="Namiki N."/>
            <person name="Negishi M."/>
            <person name="Ohta I."/>
            <person name="Ono N."/>
            <person name="Saji S."/>
            <person name="Sakai K."/>
            <person name="Shibata M."/>
            <person name="Shimokawa T."/>
            <person name="Shomura A."/>
            <person name="Song J."/>
            <person name="Takazaki Y."/>
            <person name="Terasawa K."/>
            <person name="Tsuji K."/>
            <person name="Waki K."/>
            <person name="Yamagata H."/>
            <person name="Yamane H."/>
            <person name="Yoshiki S."/>
            <person name="Yoshihara R."/>
            <person name="Yukawa K."/>
            <person name="Zhong H."/>
            <person name="Iwama H."/>
            <person name="Endo T."/>
            <person name="Ito H."/>
            <person name="Hahn J.H."/>
            <person name="Kim H.-I."/>
            <person name="Eun M.-Y."/>
            <person name="Yano M."/>
            <person name="Jiang J."/>
            <person name="Gojobori T."/>
        </authorList>
    </citation>
    <scope>NUCLEOTIDE SEQUENCE [LARGE SCALE GENOMIC DNA]</scope>
    <source>
        <strain>cv. Nipponbare</strain>
    </source>
</reference>
<reference key="2">
    <citation type="journal article" date="2005" name="Nature">
        <title>The map-based sequence of the rice genome.</title>
        <authorList>
            <consortium name="International rice genome sequencing project (IRGSP)"/>
        </authorList>
    </citation>
    <scope>NUCLEOTIDE SEQUENCE [LARGE SCALE GENOMIC DNA]</scope>
    <source>
        <strain>cv. Nipponbare</strain>
    </source>
</reference>
<reference key="3">
    <citation type="journal article" date="2008" name="Nucleic Acids Res.">
        <title>The rice annotation project database (RAP-DB): 2008 update.</title>
        <authorList>
            <consortium name="The rice annotation project (RAP)"/>
        </authorList>
    </citation>
    <scope>GENOME REANNOTATION</scope>
    <source>
        <strain>cv. Nipponbare</strain>
    </source>
</reference>
<reference key="4">
    <citation type="journal article" date="2013" name="Rice">
        <title>Improvement of the Oryza sativa Nipponbare reference genome using next generation sequence and optical map data.</title>
        <authorList>
            <person name="Kawahara Y."/>
            <person name="de la Bastide M."/>
            <person name="Hamilton J.P."/>
            <person name="Kanamori H."/>
            <person name="McCombie W.R."/>
            <person name="Ouyang S."/>
            <person name="Schwartz D.C."/>
            <person name="Tanaka T."/>
            <person name="Wu J."/>
            <person name="Zhou S."/>
            <person name="Childs K.L."/>
            <person name="Davidson R.M."/>
            <person name="Lin H."/>
            <person name="Quesada-Ocampo L."/>
            <person name="Vaillancourt B."/>
            <person name="Sakai H."/>
            <person name="Lee S.S."/>
            <person name="Kim J."/>
            <person name="Numa H."/>
            <person name="Itoh T."/>
            <person name="Buell C.R."/>
            <person name="Matsumoto T."/>
        </authorList>
    </citation>
    <scope>GENOME REANNOTATION</scope>
    <source>
        <strain>cv. Nipponbare</strain>
    </source>
</reference>
<reference key="5">
    <citation type="journal article" date="2003" name="Science">
        <title>Collection, mapping, and annotation of over 28,000 cDNA clones from japonica rice.</title>
        <authorList>
            <consortium name="The rice full-length cDNA consortium"/>
        </authorList>
    </citation>
    <scope>NUCLEOTIDE SEQUENCE [LARGE SCALE MRNA]</scope>
    <source>
        <strain>cv. Nipponbare</strain>
    </source>
</reference>
<reference key="6">
    <citation type="journal article" date="2006" name="DNA Res.">
        <title>The rice 14-3-3 gene family and its involvement in responses to biotic and abiotic stress.</title>
        <authorList>
            <person name="Chen F."/>
            <person name="Li Q."/>
            <person name="Sun L."/>
            <person name="He Z."/>
        </authorList>
    </citation>
    <scope>NOMENCLATURE</scope>
</reference>
<protein>
    <recommendedName>
        <fullName>14-3-3-like protein GF14-G</fullName>
    </recommendedName>
    <alternativeName>
        <fullName>G-box factor 14-3-3 homolog G</fullName>
    </alternativeName>
</protein>